<proteinExistence type="inferred from homology"/>
<sequence>MAEYDLTKRMAPFFDLHLVIPLLEFIEPRSIYDHDSLIKVHRRVLLKTNMIDSVIETYPEGEVPKELEQRKVEILSQREKLKVKVDPVVEILESEPVKAMMDSRELTNNRILEYVTANHGLTEEMLDSLFRYAKFQYECGNYSAASLCLDYYRNIVPQQNPNYLSALYGKLASEILLQEWTHAKDDLTKLRTYIDFNPFDTELESVQQRAWLMHWALFVYFNYPKGRDEIVEMYLNQQPYLNTIQIACPHLLRYLAVAVVTSKTKQKNSLKDLIKVIDIERHNYEXPVTXFLTCLYIKYDFDEAQKKVEEVLSNDFFLTACLEDFRESARLLIFEMFCRIHQCISIQMLAERLNMQQVEAERWIVDLIRTYRIDGAKIDSKLGQVVMGAKTTSVHEQVMENTKRLTFRAQQIALQLEKMKLDKKVCIILNFIYCEDFRNF</sequence>
<name>EIF3E_BRUMA</name>
<protein>
    <recommendedName>
        <fullName evidence="1">Eukaryotic translation initiation factor 3 subunit E</fullName>
        <shortName evidence="1">eIF3e</shortName>
    </recommendedName>
    <alternativeName>
        <fullName evidence="1">Eukaryotic translation initiation factor 3 subunit 6</fullName>
    </alternativeName>
</protein>
<evidence type="ECO:0000255" key="1">
    <source>
        <dbReference type="HAMAP-Rule" id="MF_03004"/>
    </source>
</evidence>
<evidence type="ECO:0000255" key="2">
    <source>
        <dbReference type="PROSITE-ProRule" id="PRU01185"/>
    </source>
</evidence>
<evidence type="ECO:0000305" key="3"/>
<feature type="chain" id="PRO_0000365976" description="Eukaryotic translation initiation factor 3 subunit E">
    <location>
        <begin position="1"/>
        <end position="440"/>
    </location>
</feature>
<feature type="domain" description="PCI" evidence="2">
    <location>
        <begin position="219"/>
        <end position="392"/>
    </location>
</feature>
<gene>
    <name type="ORF">Bm1_11985</name>
</gene>
<organism>
    <name type="scientific">Brugia malayi</name>
    <name type="common">Filarial nematode worm</name>
    <dbReference type="NCBI Taxonomy" id="6279"/>
    <lineage>
        <taxon>Eukaryota</taxon>
        <taxon>Metazoa</taxon>
        <taxon>Ecdysozoa</taxon>
        <taxon>Nematoda</taxon>
        <taxon>Chromadorea</taxon>
        <taxon>Rhabditida</taxon>
        <taxon>Spirurina</taxon>
        <taxon>Spiruromorpha</taxon>
        <taxon>Filarioidea</taxon>
        <taxon>Onchocercidae</taxon>
        <taxon>Brugia</taxon>
    </lineage>
</organism>
<comment type="function">
    <text evidence="1">Component of the eukaryotic translation initiation factor 3 (eIF-3) complex, which is involved in protein synthesis of a specialized repertoire of mRNAs and, together with other initiation factors, stimulates binding of mRNA and methionyl-tRNAi to the 40S ribosome. The eIF-3 complex specifically targets and initiates translation of a subset of mRNAs involved in cell proliferation.</text>
</comment>
<comment type="subunit">
    <text evidence="1">Component of the eukaryotic translation initiation factor 3 (eIF-3) complex.</text>
</comment>
<comment type="subcellular location">
    <subcellularLocation>
        <location evidence="1">Cytoplasm</location>
    </subcellularLocation>
</comment>
<comment type="similarity">
    <text evidence="1">Belongs to the eIF-3 subunit E family.</text>
</comment>
<comment type="sequence caution" evidence="3">
    <conflict type="miscellaneous discrepancy">
        <sequence resource="EMBL-CDS" id="EDP37295"/>
    </conflict>
    <text>Prediction prematurely truncated in last exon prior to stop.</text>
</comment>
<keyword id="KW-0963">Cytoplasm</keyword>
<keyword id="KW-0396">Initiation factor</keyword>
<keyword id="KW-0648">Protein biosynthesis</keyword>
<keyword id="KW-1185">Reference proteome</keyword>
<reference key="1">
    <citation type="journal article" date="2007" name="Science">
        <title>Draft genome of the filarial nematode parasite Brugia malayi.</title>
        <authorList>
            <person name="Ghedin E."/>
            <person name="Wang S."/>
            <person name="Spiro D."/>
            <person name="Caler E."/>
            <person name="Zhao Q."/>
            <person name="Crabtree J."/>
            <person name="Allen J.E."/>
            <person name="Delcher A.L."/>
            <person name="Guiliano D.B."/>
            <person name="Miranda-Saavedra D."/>
            <person name="Angiuoli S.V."/>
            <person name="Creasy T."/>
            <person name="Amedeo P."/>
            <person name="Haas B."/>
            <person name="El-Sayed N.M."/>
            <person name="Wortman J.R."/>
            <person name="Feldblyum T."/>
            <person name="Tallon L."/>
            <person name="Schatz M."/>
            <person name="Shumway M."/>
            <person name="Koo H."/>
            <person name="Salzberg S.L."/>
            <person name="Schobel S."/>
            <person name="Pertea M."/>
            <person name="Pop M."/>
            <person name="White O."/>
            <person name="Barton G.J."/>
            <person name="Carlow C.K.S."/>
            <person name="Crawford M.J."/>
            <person name="Daub J."/>
            <person name="Dimmic M.W."/>
            <person name="Estes C.F."/>
            <person name="Foster J.M."/>
            <person name="Ganatra M."/>
            <person name="Gregory W.F."/>
            <person name="Johnson N.M."/>
            <person name="Jin J."/>
            <person name="Komuniecki R."/>
            <person name="Korf I."/>
            <person name="Kumar S."/>
            <person name="Laney S."/>
            <person name="Li B.-W."/>
            <person name="Li W."/>
            <person name="Lindblom T.H."/>
            <person name="Lustigman S."/>
            <person name="Ma D."/>
            <person name="Maina C.V."/>
            <person name="Martin D.M."/>
            <person name="McCarter J.P."/>
            <person name="McReynolds L."/>
            <person name="Mitreva M."/>
            <person name="Nutman T.B."/>
            <person name="Parkinson J."/>
            <person name="Peregrin-Alvarez J.M."/>
            <person name="Poole C."/>
            <person name="Ren Q."/>
            <person name="Saunders L."/>
            <person name="Sluder A.E."/>
            <person name="Smith K."/>
            <person name="Stanke M."/>
            <person name="Unnasch T.R."/>
            <person name="Ware J."/>
            <person name="Wei A.D."/>
            <person name="Weil G."/>
            <person name="Williams D.J."/>
            <person name="Zhang Y."/>
            <person name="Williams S.A."/>
            <person name="Fraser-Liggett C."/>
            <person name="Slatko B."/>
            <person name="Blaxter M.L."/>
            <person name="Scott A.L."/>
        </authorList>
    </citation>
    <scope>NUCLEOTIDE SEQUENCE [LARGE SCALE GENOMIC DNA]</scope>
</reference>
<dbReference type="EMBL" id="DS238250">
    <property type="protein sequence ID" value="EDP37295.1"/>
    <property type="status" value="ALT_SEQ"/>
    <property type="molecule type" value="Genomic_DNA"/>
</dbReference>
<dbReference type="RefSeq" id="XP_001893867.1">
    <property type="nucleotide sequence ID" value="XM_001893832.1"/>
</dbReference>
<dbReference type="FunCoup" id="A8NY27">
    <property type="interactions" value="2301"/>
</dbReference>
<dbReference type="STRING" id="6279.A8NY27"/>
<dbReference type="WormBase" id="Bm1841">
    <property type="protein sequence ID" value="BM31767"/>
    <property type="gene ID" value="WBGene00222102"/>
    <property type="gene designation" value="Bma-eif-3.E"/>
</dbReference>
<dbReference type="InParanoid" id="A8NY27"/>
<dbReference type="Proteomes" id="UP000006672">
    <property type="component" value="Unassembled WGS sequence"/>
</dbReference>
<dbReference type="GO" id="GO:0016282">
    <property type="term" value="C:eukaryotic 43S preinitiation complex"/>
    <property type="evidence" value="ECO:0007669"/>
    <property type="project" value="UniProtKB-UniRule"/>
</dbReference>
<dbReference type="GO" id="GO:0033290">
    <property type="term" value="C:eukaryotic 48S preinitiation complex"/>
    <property type="evidence" value="ECO:0007669"/>
    <property type="project" value="UniProtKB-UniRule"/>
</dbReference>
<dbReference type="GO" id="GO:0071540">
    <property type="term" value="C:eukaryotic translation initiation factor 3 complex, eIF3e"/>
    <property type="evidence" value="ECO:0007669"/>
    <property type="project" value="UniProtKB-UniRule"/>
</dbReference>
<dbReference type="GO" id="GO:0003743">
    <property type="term" value="F:translation initiation factor activity"/>
    <property type="evidence" value="ECO:0007669"/>
    <property type="project" value="UniProtKB-UniRule"/>
</dbReference>
<dbReference type="GO" id="GO:0001732">
    <property type="term" value="P:formation of cytoplasmic translation initiation complex"/>
    <property type="evidence" value="ECO:0007669"/>
    <property type="project" value="UniProtKB-UniRule"/>
</dbReference>
<dbReference type="CDD" id="cd21378">
    <property type="entry name" value="eIF3E"/>
    <property type="match status" value="1"/>
</dbReference>
<dbReference type="HAMAP" id="MF_03004">
    <property type="entry name" value="eIF3e"/>
    <property type="match status" value="1"/>
</dbReference>
<dbReference type="InterPro" id="IPR016650">
    <property type="entry name" value="eIF3e"/>
</dbReference>
<dbReference type="InterPro" id="IPR019010">
    <property type="entry name" value="eIF3e_N"/>
</dbReference>
<dbReference type="InterPro" id="IPR000717">
    <property type="entry name" value="PCI_dom"/>
</dbReference>
<dbReference type="InterPro" id="IPR036390">
    <property type="entry name" value="WH_DNA-bd_sf"/>
</dbReference>
<dbReference type="PANTHER" id="PTHR10317">
    <property type="entry name" value="EUKARYOTIC TRANSLATION INITIATION FACTOR 3 SUBUNIT E"/>
    <property type="match status" value="1"/>
</dbReference>
<dbReference type="Pfam" id="PF09440">
    <property type="entry name" value="eIF3_N"/>
    <property type="match status" value="1"/>
</dbReference>
<dbReference type="Pfam" id="PF01399">
    <property type="entry name" value="PCI"/>
    <property type="match status" value="1"/>
</dbReference>
<dbReference type="PIRSF" id="PIRSF016255">
    <property type="entry name" value="eIF3e_su6"/>
    <property type="match status" value="1"/>
</dbReference>
<dbReference type="SMART" id="SM01186">
    <property type="entry name" value="eIF3_N"/>
    <property type="match status" value="1"/>
</dbReference>
<dbReference type="SMART" id="SM00088">
    <property type="entry name" value="PINT"/>
    <property type="match status" value="1"/>
</dbReference>
<dbReference type="SUPFAM" id="SSF46785">
    <property type="entry name" value="Winged helix' DNA-binding domain"/>
    <property type="match status" value="1"/>
</dbReference>
<dbReference type="PROSITE" id="PS50250">
    <property type="entry name" value="PCI"/>
    <property type="match status" value="1"/>
</dbReference>
<accession>A8NY27</accession>